<accession>Q6MLJ0</accession>
<dbReference type="EMBL" id="BX842651">
    <property type="protein sequence ID" value="CAE79867.1"/>
    <property type="molecule type" value="Genomic_DNA"/>
</dbReference>
<dbReference type="PDB" id="5AYM">
    <property type="method" value="X-ray"/>
    <property type="resolution" value="3.00 A"/>
    <property type="chains" value="A=1-433"/>
</dbReference>
<dbReference type="PDB" id="5AYN">
    <property type="method" value="X-ray"/>
    <property type="resolution" value="2.20 A"/>
    <property type="chains" value="A=1-433"/>
</dbReference>
<dbReference type="PDB" id="5AYO">
    <property type="method" value="X-ray"/>
    <property type="resolution" value="3.30 A"/>
    <property type="chains" value="A=1-433"/>
</dbReference>
<dbReference type="PDB" id="6BTX">
    <property type="method" value="X-ray"/>
    <property type="resolution" value="3.20 A"/>
    <property type="chains" value="A=1-433"/>
</dbReference>
<dbReference type="PDBsum" id="5AYM"/>
<dbReference type="PDBsum" id="5AYN"/>
<dbReference type="PDBsum" id="5AYO"/>
<dbReference type="PDBsum" id="6BTX"/>
<dbReference type="SMR" id="Q6MLJ0"/>
<dbReference type="STRING" id="264462.Bd2019"/>
<dbReference type="TCDB" id="2.A.100.2.1">
    <property type="family name" value="the ferroportin (fpn) family"/>
</dbReference>
<dbReference type="KEGG" id="bba:Bd2019"/>
<dbReference type="HOGENOM" id="CLU_622092_0_0_7"/>
<dbReference type="EvolutionaryTrace" id="Q6MLJ0"/>
<dbReference type="Proteomes" id="UP000008080">
    <property type="component" value="Chromosome"/>
</dbReference>
<dbReference type="GO" id="GO:0005886">
    <property type="term" value="C:plasma membrane"/>
    <property type="evidence" value="ECO:0007669"/>
    <property type="project" value="UniProtKB-SubCell"/>
</dbReference>
<dbReference type="GO" id="GO:0005381">
    <property type="term" value="F:iron ion transmembrane transporter activity"/>
    <property type="evidence" value="ECO:0007669"/>
    <property type="project" value="InterPro"/>
</dbReference>
<dbReference type="GO" id="GO:0046872">
    <property type="term" value="F:metal ion binding"/>
    <property type="evidence" value="ECO:0007669"/>
    <property type="project" value="UniProtKB-KW"/>
</dbReference>
<dbReference type="CDD" id="cd17480">
    <property type="entry name" value="MFS_SLC40A1_like"/>
    <property type="match status" value="1"/>
</dbReference>
<dbReference type="Gene3D" id="1.20.1250.20">
    <property type="entry name" value="MFS general substrate transporter like domains"/>
    <property type="match status" value="1"/>
</dbReference>
<dbReference type="InterPro" id="IPR009716">
    <property type="entry name" value="Ferroportin-1"/>
</dbReference>
<dbReference type="InterPro" id="IPR036259">
    <property type="entry name" value="MFS_trans_sf"/>
</dbReference>
<dbReference type="PANTHER" id="PTHR11660">
    <property type="entry name" value="SOLUTE CARRIER FAMILY 40 MEMBER"/>
    <property type="match status" value="1"/>
</dbReference>
<dbReference type="PANTHER" id="PTHR11660:SF57">
    <property type="entry name" value="SOLUTE CARRIER FAMILY 40 MEMBER"/>
    <property type="match status" value="1"/>
</dbReference>
<dbReference type="Pfam" id="PF06963">
    <property type="entry name" value="FPN1"/>
    <property type="match status" value="2"/>
</dbReference>
<dbReference type="SUPFAM" id="SSF103473">
    <property type="entry name" value="MFS general substrate transporter"/>
    <property type="match status" value="1"/>
</dbReference>
<protein>
    <recommendedName>
        <fullName evidence="4">Ferreportin</fullName>
        <shortName>Fpn</shortName>
    </recommendedName>
</protein>
<gene>
    <name type="primary">slc39</name>
    <name type="ordered locus">Bd2019</name>
</gene>
<keyword id="KW-0002">3D-structure</keyword>
<keyword id="KW-1003">Cell membrane</keyword>
<keyword id="KW-0472">Membrane</keyword>
<keyword id="KW-0479">Metal-binding</keyword>
<keyword id="KW-1185">Reference proteome</keyword>
<keyword id="KW-0812">Transmembrane</keyword>
<keyword id="KW-1133">Transmembrane helix</keyword>
<keyword id="KW-0813">Transport</keyword>
<keyword id="KW-0862">Zinc</keyword>
<comment type="function">
    <text evidence="1 2 3">Iron transpoter that exports Fe(2+) from the cell. Also binds to Co(2+) and Ni(2+). May act as a multivalent divalent metal transporter (PubMed:26608034). The transporter is composed of 12 transmembrane (TM) helices organized into N-terminal (TM1-6) and C-terminal (TM7-12) domains. The substrate-binding site is formed at the interface of the two domains and is alternately accessible from either side of the membrane. The transport cycle is viewed as a series of ligand-induced conformational changes that include open outward and open inward states (PubMed:26461048, PubMed:30082682).</text>
</comment>
<comment type="cofactor">
    <cofactor evidence="3">
        <name>Ca(2+)</name>
        <dbReference type="ChEBI" id="CHEBI:29108"/>
    </cofactor>
    <text evidence="3">The cofactor facilitates a conformational change critical to the transport cycle. The binding of Ca2+ from extracellular fluid activates the transporter by triggering a conformational change that enables the transition from the open outward to open inward states.</text>
</comment>
<comment type="subcellular location">
    <subcellularLocation>
        <location evidence="6">Cell membrane</location>
        <topology evidence="1">Multi-pass membrane protein</topology>
    </subcellularLocation>
</comment>
<comment type="similarity">
    <text evidence="5">Belongs to the ferroportin (FP) (TC 2.A.100) family.</text>
</comment>
<reference key="1">
    <citation type="journal article" date="2004" name="Science">
        <title>A predator unmasked: life cycle of Bdellovibrio bacteriovorus from a genomic perspective.</title>
        <authorList>
            <person name="Rendulic S."/>
            <person name="Jagtap P."/>
            <person name="Rosinus A."/>
            <person name="Eppinger M."/>
            <person name="Baar C."/>
            <person name="Lanz C."/>
            <person name="Keller H."/>
            <person name="Lambert C."/>
            <person name="Evans K.J."/>
            <person name="Goesmann A."/>
            <person name="Meyer F."/>
            <person name="Sockett R.E."/>
            <person name="Schuster S.C."/>
        </authorList>
    </citation>
    <scope>NUCLEOTIDE SEQUENCE [LARGE SCALE GENOMIC DNA]</scope>
    <source>
        <strain>ATCC 15356 / DSM 50701 / NCIMB 9529 / HD100</strain>
    </source>
</reference>
<reference key="2">
    <citation type="journal article" date="2015" name="FEBS Lett.">
        <title>A bacterial homologue of the human iron exporter ferroportin.</title>
        <authorList>
            <person name="Bonaccorsi di Patti M.C."/>
            <person name="Polticelli F."/>
            <person name="Tortosa V."/>
            <person name="Furbetta P.A."/>
            <person name="Musci G."/>
        </authorList>
    </citation>
    <scope>FUNCTION</scope>
    <scope>MUTAGENESIS OF ASP-24; ASP-28; ASP-162; GLU-166; HIS-261 AND ARG-348</scope>
</reference>
<reference evidence="7 8" key="3">
    <citation type="journal article" date="2015" name="Nat. Commun.">
        <title>Outward- and inward-facing structures of a putative bacterial transition-metal transporter with homology to ferroportin.</title>
        <authorList>
            <person name="Taniguchi R."/>
            <person name="Kato H.E."/>
            <person name="Font J."/>
            <person name="Deshpande C.N."/>
            <person name="Wada M."/>
            <person name="Ito K."/>
            <person name="Ishitani R."/>
            <person name="Jormakka M."/>
            <person name="Nureki O."/>
        </authorList>
    </citation>
    <scope>X-RAY CRYSTALLOGRAPHY (2.20 ANGSTROMS) OF 1-433 IN COMPLEX WITH IRON</scope>
    <scope>SUBCELLULAR LOCATION</scope>
    <scope>MUTAGENESIS OF ASP-24 AND ASN-196</scope>
</reference>
<reference evidence="9" key="4">
    <citation type="journal article" date="2018" name="Nat. Commun.">
        <title>Calcium is an essential cofactor for metal efflux by the ferroportin transporter family.</title>
        <authorList>
            <person name="Deshpande C.N."/>
            <person name="Ruwe T.A."/>
            <person name="Shawki A."/>
            <person name="Xin V."/>
            <person name="Vieth K.R."/>
            <person name="Valore E.V."/>
            <person name="Qiao B."/>
            <person name="Ganz T."/>
            <person name="Nemeth E."/>
            <person name="Mackenzie B."/>
            <person name="Jormakka M."/>
        </authorList>
    </citation>
    <scope>X-RAY CRYSTALLOGRAPHY (3.20 ANGSTROMS) OF 1-433</scope>
    <scope>COFACTOR</scope>
    <scope>MUTAGENESIS OF ASP-24; GLN-84; ASN-196 AND GLU-203</scope>
</reference>
<sequence length="440" mass="48363">MKVQSLLRIETQLLLGRLLTRSGDQAWDFVVPFALLVIFPGKLQVAAFYYLIVKIGTFLLTPSSGKWIDTHPRIQVVKWGVWLQFFAILAGMVFFGMLDGLVRAGGRESWLLSVLFIALALSGVMASLGSQITDISVGNDLAPSLVAPEKLTHFNSWLRRIDLATEVGAPILAGALFAFHPEQLPLAGLFLIGLWNLVSFVPEYFLLRNVIQRSGLKIKVLTEAQSWKDTFHINLRGSFSDPIFWLILSYALLWLSVLSPHGVLLAAYLKDEMRLPETEIGLFRGLGAVFGLISTVSFPYLVRRLGLISSSRWHLGFQGVTLGIAVTAFAMGSTASVYVFLGCILLSRVGLYGFSNGEFELRQRLIPEGRRGELNSLSSLTTTSATLILFSAGSLLPQTEDFKYLVYVSLAAVLLANVVFIKWSSRQGVVTSGAAEPVES</sequence>
<proteinExistence type="evidence at protein level"/>
<name>FPN_BDEBA</name>
<feature type="chain" id="PRO_0000453803" description="Ferreportin">
    <location>
        <begin position="1"/>
        <end position="440"/>
    </location>
</feature>
<feature type="topological domain" description="Cytoplasmic" evidence="6">
    <location>
        <begin position="1"/>
        <end position="8"/>
    </location>
</feature>
<feature type="transmembrane region" description="Helical; Name=1" evidence="1 8">
    <location>
        <begin position="9"/>
        <end position="38"/>
    </location>
</feature>
<feature type="topological domain" description="Extracellular" evidence="6">
    <location>
        <begin position="39"/>
        <end position="42"/>
    </location>
</feature>
<feature type="transmembrane region" description="Helical; Name=2" evidence="1 8">
    <location>
        <begin position="43"/>
        <end position="69"/>
    </location>
</feature>
<feature type="topological domain" description="Cytoplasmic" evidence="6">
    <location>
        <begin position="70"/>
        <end position="72"/>
    </location>
</feature>
<feature type="transmembrane region" description="Helical; Name=3" evidence="1 8">
    <location>
        <begin position="73"/>
        <end position="103"/>
    </location>
</feature>
<feature type="topological domain" description="Extracellular" evidence="6">
    <location>
        <begin position="104"/>
        <end position="109"/>
    </location>
</feature>
<feature type="transmembrane region" description="Helical; Name=4" evidence="1 8">
    <location>
        <begin position="110"/>
        <end position="145"/>
    </location>
</feature>
<feature type="topological domain" description="Cytoplasmic" evidence="6">
    <location>
        <begin position="146"/>
        <end position="147"/>
    </location>
</feature>
<feature type="transmembrane region" description="Helical; Name=5" evidence="1 8">
    <location>
        <begin position="148"/>
        <end position="176"/>
    </location>
</feature>
<feature type="topological domain" description="Extracellular" evidence="6">
    <location>
        <begin position="177"/>
        <end position="186"/>
    </location>
</feature>
<feature type="transmembrane region" description="Helical; Name=6" evidence="1 8">
    <location>
        <begin position="187"/>
        <end position="213"/>
    </location>
</feature>
<feature type="topological domain" description="Cytoplasmic" evidence="6">
    <location>
        <begin position="214"/>
        <end position="242"/>
    </location>
</feature>
<feature type="transmembrane region" description="Helical; Name=7" evidence="1 8">
    <location>
        <begin position="243"/>
        <end position="271"/>
    </location>
</feature>
<feature type="topological domain" description="Extracellular" evidence="6">
    <location>
        <begin position="272"/>
        <end position="276"/>
    </location>
</feature>
<feature type="transmembrane region" description="Helical; Name=8" evidence="1 8">
    <location>
        <begin position="277"/>
        <end position="304"/>
    </location>
</feature>
<feature type="topological domain" description="Cytoplasmic" evidence="6">
    <location>
        <begin position="305"/>
        <end position="306"/>
    </location>
</feature>
<feature type="transmembrane region" description="Helical; Name=9" evidence="1 8">
    <location>
        <begin position="307"/>
        <end position="329"/>
    </location>
</feature>
<feature type="topological domain" description="Extracellular" evidence="6">
    <location>
        <begin position="330"/>
        <end position="335"/>
    </location>
</feature>
<feature type="transmembrane region" description="Helical; Name=10" evidence="1 8">
    <location>
        <begin position="336"/>
        <end position="365"/>
    </location>
</feature>
<feature type="topological domain" description="Cytoplasmic" evidence="6">
    <location>
        <begin position="366"/>
        <end position="370"/>
    </location>
</feature>
<feature type="transmembrane region" description="Helical; Name=11" evidence="1 8">
    <location>
        <begin position="371"/>
        <end position="395"/>
    </location>
</feature>
<feature type="topological domain" description="Extracellular" evidence="6">
    <location>
        <begin position="396"/>
        <end position="398"/>
    </location>
</feature>
<feature type="transmembrane region" description="Helical; Name=12" evidence="1 8">
    <location>
        <begin position="399"/>
        <end position="424"/>
    </location>
</feature>
<feature type="topological domain" description="Cytoplasmic" evidence="6">
    <location>
        <begin position="425"/>
        <end position="440"/>
    </location>
</feature>
<feature type="binding site" evidence="3 9">
    <location>
        <position position="24"/>
    </location>
    <ligand>
        <name>Ca(2+)</name>
        <dbReference type="ChEBI" id="CHEBI:29108"/>
    </ligand>
</feature>
<feature type="binding site" evidence="3 9">
    <location>
        <position position="84"/>
    </location>
    <ligand>
        <name>Ca(2+)</name>
        <dbReference type="ChEBI" id="CHEBI:29108"/>
    </ligand>
</feature>
<feature type="binding site" evidence="3 9">
    <location>
        <position position="196"/>
    </location>
    <ligand>
        <name>Ca(2+)</name>
        <dbReference type="ChEBI" id="CHEBI:29108"/>
    </ligand>
</feature>
<feature type="binding site" evidence="3 9">
    <location>
        <position position="203"/>
    </location>
    <ligand>
        <name>Ca(2+)</name>
        <dbReference type="ChEBI" id="CHEBI:29108"/>
    </ligand>
</feature>
<feature type="mutagenesis site" description="Slows down the kinetics of iron transport, while not affecting the iron binding ability. Complete loss of calcium binding." evidence="1 2 3">
    <original>D</original>
    <variation>A</variation>
    <location>
        <position position="24"/>
    </location>
</feature>
<feature type="mutagenesis site" description="No effect." evidence="2">
    <original>D</original>
    <variation>A</variation>
    <location>
        <position position="28"/>
    </location>
</feature>
<feature type="mutagenesis site" description="Complete loss of calcium binding." evidence="3">
    <original>Q</original>
    <variation>E</variation>
    <location>
        <position position="84"/>
    </location>
</feature>
<feature type="mutagenesis site" description="No effect." evidence="2">
    <original>D</original>
    <variation>A</variation>
    <location>
        <position position="162"/>
    </location>
</feature>
<feature type="mutagenesis site" description="Slows down the kinetics of iron transport, while not affecting the iron binding ability." evidence="2">
    <original>E</original>
    <variation>A</variation>
    <location>
        <position position="166"/>
    </location>
</feature>
<feature type="mutagenesis site" description="Reduces transport activity. Complete loss of calcium binding." evidence="1 3">
    <original>N</original>
    <variation>A</variation>
    <location>
        <position position="196"/>
    </location>
</feature>
<feature type="mutagenesis site" description="Complete loss of calcium binding." evidence="3">
    <original>E</original>
    <variation>A</variation>
    <location>
        <position position="203"/>
    </location>
</feature>
<feature type="mutagenesis site" description="Complete loss of iron binding. Completely abolishes the transport ability." evidence="2">
    <original>H</original>
    <variation>D</variation>
    <location>
        <position position="261"/>
    </location>
</feature>
<feature type="mutagenesis site" description="Complete loss of iron binding. Completely abolishes the transport ability." evidence="2">
    <original>R</original>
    <variation>M</variation>
    <location>
        <position position="348"/>
    </location>
</feature>
<feature type="helix" evidence="10">
    <location>
        <begin position="9"/>
        <end position="38"/>
    </location>
</feature>
<feature type="helix" evidence="10">
    <location>
        <begin position="43"/>
        <end position="68"/>
    </location>
</feature>
<feature type="helix" evidence="10">
    <location>
        <begin position="73"/>
        <end position="103"/>
    </location>
</feature>
<feature type="strand" evidence="11">
    <location>
        <begin position="107"/>
        <end position="109"/>
    </location>
</feature>
<feature type="helix" evidence="10">
    <location>
        <begin position="110"/>
        <end position="139"/>
    </location>
</feature>
<feature type="helix" evidence="10">
    <location>
        <begin position="141"/>
        <end position="145"/>
    </location>
</feature>
<feature type="helix" evidence="10">
    <location>
        <begin position="148"/>
        <end position="150"/>
    </location>
</feature>
<feature type="helix" evidence="10">
    <location>
        <begin position="151"/>
        <end position="176"/>
    </location>
</feature>
<feature type="helix" evidence="10">
    <location>
        <begin position="187"/>
        <end position="212"/>
    </location>
</feature>
<feature type="helix" evidence="10">
    <location>
        <begin position="215"/>
        <end position="217"/>
    </location>
</feature>
<feature type="helix" evidence="10">
    <location>
        <begin position="236"/>
        <end position="239"/>
    </location>
</feature>
<feature type="helix" evidence="10">
    <location>
        <begin position="243"/>
        <end position="251"/>
    </location>
</feature>
<feature type="helix" evidence="10">
    <location>
        <begin position="252"/>
        <end position="255"/>
    </location>
</feature>
<feature type="helix" evidence="10">
    <location>
        <begin position="263"/>
        <end position="271"/>
    </location>
</feature>
<feature type="helix" evidence="10">
    <location>
        <begin position="277"/>
        <end position="305"/>
    </location>
</feature>
<feature type="helix" evidence="10">
    <location>
        <begin position="307"/>
        <end position="330"/>
    </location>
</feature>
<feature type="helix" evidence="10">
    <location>
        <begin position="334"/>
        <end position="336"/>
    </location>
</feature>
<feature type="helix" evidence="10">
    <location>
        <begin position="337"/>
        <end position="365"/>
    </location>
</feature>
<feature type="helix" evidence="10">
    <location>
        <begin position="368"/>
        <end position="370"/>
    </location>
</feature>
<feature type="helix" evidence="10">
    <location>
        <begin position="371"/>
        <end position="395"/>
    </location>
</feature>
<feature type="helix" evidence="10">
    <location>
        <begin position="399"/>
        <end position="401"/>
    </location>
</feature>
<feature type="helix" evidence="10">
    <location>
        <begin position="402"/>
        <end position="424"/>
    </location>
</feature>
<evidence type="ECO:0000269" key="1">
    <source>
    </source>
</evidence>
<evidence type="ECO:0000269" key="2">
    <source>
    </source>
</evidence>
<evidence type="ECO:0000269" key="3">
    <source>
    </source>
</evidence>
<evidence type="ECO:0000303" key="4">
    <source>
    </source>
</evidence>
<evidence type="ECO:0000305" key="5"/>
<evidence type="ECO:0000305" key="6">
    <source>
    </source>
</evidence>
<evidence type="ECO:0007744" key="7">
    <source>
        <dbReference type="PDB" id="5AYM"/>
    </source>
</evidence>
<evidence type="ECO:0007744" key="8">
    <source>
        <dbReference type="PDB" id="5AYN"/>
    </source>
</evidence>
<evidence type="ECO:0007744" key="9">
    <source>
        <dbReference type="PDB" id="6BTX"/>
    </source>
</evidence>
<evidence type="ECO:0007829" key="10">
    <source>
        <dbReference type="PDB" id="5AYN"/>
    </source>
</evidence>
<evidence type="ECO:0007829" key="11">
    <source>
        <dbReference type="PDB" id="5AYO"/>
    </source>
</evidence>
<organism>
    <name type="scientific">Bdellovibrio bacteriovorus (strain ATCC 15356 / DSM 50701 / NCIMB 9529 / HD100)</name>
    <dbReference type="NCBI Taxonomy" id="264462"/>
    <lineage>
        <taxon>Bacteria</taxon>
        <taxon>Pseudomonadati</taxon>
        <taxon>Bdellovibrionota</taxon>
        <taxon>Bdellovibrionia</taxon>
        <taxon>Bdellovibrionales</taxon>
        <taxon>Pseudobdellovibrionaceae</taxon>
        <taxon>Bdellovibrio</taxon>
    </lineage>
</organism>